<dbReference type="EC" id="3.1.3.77" evidence="1"/>
<dbReference type="EMBL" id="GG698912">
    <property type="protein sequence ID" value="EEU39175.1"/>
    <property type="molecule type" value="Genomic_DNA"/>
</dbReference>
<dbReference type="RefSeq" id="XP_003044888.1">
    <property type="nucleotide sequence ID" value="XM_003044842.1"/>
</dbReference>
<dbReference type="SMR" id="C7Z9X4"/>
<dbReference type="FunCoup" id="C7Z9X4">
    <property type="interactions" value="640"/>
</dbReference>
<dbReference type="STRING" id="660122.C7Z9X4"/>
<dbReference type="EnsemblFungi" id="NechaT70452">
    <property type="protein sequence ID" value="NechaP70452"/>
    <property type="gene ID" value="NechaG70452"/>
</dbReference>
<dbReference type="GeneID" id="9672246"/>
<dbReference type="KEGG" id="nhe:NECHADRAFT_70452"/>
<dbReference type="VEuPathDB" id="FungiDB:NECHADRAFT_70452"/>
<dbReference type="eggNOG" id="KOG2630">
    <property type="taxonomic scope" value="Eukaryota"/>
</dbReference>
<dbReference type="HOGENOM" id="CLU_023273_1_1_1"/>
<dbReference type="InParanoid" id="C7Z9X4"/>
<dbReference type="OMA" id="LQGMVWE"/>
<dbReference type="OrthoDB" id="272500at2759"/>
<dbReference type="UniPathway" id="UPA00904">
    <property type="reaction ID" value="UER00876"/>
</dbReference>
<dbReference type="UniPathway" id="UPA00904">
    <property type="reaction ID" value="UER00877"/>
</dbReference>
<dbReference type="Proteomes" id="UP000005206">
    <property type="component" value="Unassembled WGS sequence"/>
</dbReference>
<dbReference type="GO" id="GO:0005737">
    <property type="term" value="C:cytoplasm"/>
    <property type="evidence" value="ECO:0007669"/>
    <property type="project" value="UniProtKB-SubCell"/>
</dbReference>
<dbReference type="GO" id="GO:0005634">
    <property type="term" value="C:nucleus"/>
    <property type="evidence" value="ECO:0007669"/>
    <property type="project" value="UniProtKB-SubCell"/>
</dbReference>
<dbReference type="GO" id="GO:0043874">
    <property type="term" value="F:acireductone synthase activity"/>
    <property type="evidence" value="ECO:0007669"/>
    <property type="project" value="UniProtKB-EC"/>
</dbReference>
<dbReference type="GO" id="GO:0000287">
    <property type="term" value="F:magnesium ion binding"/>
    <property type="evidence" value="ECO:0007669"/>
    <property type="project" value="UniProtKB-UniRule"/>
</dbReference>
<dbReference type="GO" id="GO:0019509">
    <property type="term" value="P:L-methionine salvage from methylthioadenosine"/>
    <property type="evidence" value="ECO:0007669"/>
    <property type="project" value="UniProtKB-UniRule"/>
</dbReference>
<dbReference type="CDD" id="cd01629">
    <property type="entry name" value="HAD_EP"/>
    <property type="match status" value="1"/>
</dbReference>
<dbReference type="FunFam" id="1.10.720.60:FF:000007">
    <property type="entry name" value="Enolase-phosphatase E1"/>
    <property type="match status" value="1"/>
</dbReference>
<dbReference type="Gene3D" id="1.10.720.60">
    <property type="match status" value="1"/>
</dbReference>
<dbReference type="Gene3D" id="3.40.50.1000">
    <property type="entry name" value="HAD superfamily/HAD-like"/>
    <property type="match status" value="1"/>
</dbReference>
<dbReference type="HAMAP" id="MF_03117">
    <property type="entry name" value="Salvage_MtnC_euk"/>
    <property type="match status" value="1"/>
</dbReference>
<dbReference type="InterPro" id="IPR023943">
    <property type="entry name" value="Enolase-ppase_E1"/>
</dbReference>
<dbReference type="InterPro" id="IPR027511">
    <property type="entry name" value="ENOPH1_eukaryotes"/>
</dbReference>
<dbReference type="InterPro" id="IPR036412">
    <property type="entry name" value="HAD-like_sf"/>
</dbReference>
<dbReference type="InterPro" id="IPR023214">
    <property type="entry name" value="HAD_sf"/>
</dbReference>
<dbReference type="NCBIfam" id="TIGR01691">
    <property type="entry name" value="enolase-ppase"/>
    <property type="match status" value="1"/>
</dbReference>
<dbReference type="PANTHER" id="PTHR20371">
    <property type="entry name" value="ENOLASE-PHOSPHATASE E1"/>
    <property type="match status" value="1"/>
</dbReference>
<dbReference type="PANTHER" id="PTHR20371:SF1">
    <property type="entry name" value="ENOLASE-PHOSPHATASE E1"/>
    <property type="match status" value="1"/>
</dbReference>
<dbReference type="Pfam" id="PF00702">
    <property type="entry name" value="Hydrolase"/>
    <property type="match status" value="1"/>
</dbReference>
<dbReference type="SFLD" id="SFLDG01133">
    <property type="entry name" value="C1.5.4:_Enolase-phosphatase_Li"/>
    <property type="match status" value="1"/>
</dbReference>
<dbReference type="SFLD" id="SFLDG01129">
    <property type="entry name" value="C1.5:_HAD__Beta-PGM__Phosphata"/>
    <property type="match status" value="1"/>
</dbReference>
<dbReference type="SUPFAM" id="SSF56784">
    <property type="entry name" value="HAD-like"/>
    <property type="match status" value="1"/>
</dbReference>
<reference key="1">
    <citation type="journal article" date="2009" name="PLoS Genet.">
        <title>The genome of Nectria haematococca: contribution of supernumerary chromosomes to gene expansion.</title>
        <authorList>
            <person name="Coleman J.J."/>
            <person name="Rounsley S.D."/>
            <person name="Rodriguez-Carres M."/>
            <person name="Kuo A."/>
            <person name="Wasmann C.C."/>
            <person name="Grimwood J."/>
            <person name="Schmutz J."/>
            <person name="Taga M."/>
            <person name="White G.J."/>
            <person name="Zhou S."/>
            <person name="Schwartz D.C."/>
            <person name="Freitag M."/>
            <person name="Ma L.-J."/>
            <person name="Danchin E.G.J."/>
            <person name="Henrissat B."/>
            <person name="Coutinho P.M."/>
            <person name="Nelson D.R."/>
            <person name="Straney D."/>
            <person name="Napoli C.A."/>
            <person name="Barker B.M."/>
            <person name="Gribskov M."/>
            <person name="Rep M."/>
            <person name="Kroken S."/>
            <person name="Molnar I."/>
            <person name="Rensing C."/>
            <person name="Kennell J.C."/>
            <person name="Zamora J."/>
            <person name="Farman M.L."/>
            <person name="Selker E.U."/>
            <person name="Salamov A."/>
            <person name="Shapiro H."/>
            <person name="Pangilinan J."/>
            <person name="Lindquist E."/>
            <person name="Lamers C."/>
            <person name="Grigoriev I.V."/>
            <person name="Geiser D.M."/>
            <person name="Covert S.F."/>
            <person name="Temporini E."/>
            <person name="VanEtten H.D."/>
        </authorList>
    </citation>
    <scope>NUCLEOTIDE SEQUENCE [LARGE SCALE GENOMIC DNA]</scope>
    <source>
        <strain>ATCC MYA-4622 / CBS 123669 / FGSC 9596 / NRRL 45880 / 77-13-4</strain>
    </source>
</reference>
<name>ENOPH_FUSV7</name>
<protein>
    <recommendedName>
        <fullName evidence="1">Enolase-phosphatase E1</fullName>
        <ecNumber evidence="1">3.1.3.77</ecNumber>
    </recommendedName>
    <alternativeName>
        <fullName evidence="1">2,3-diketo-5-methylthio-1-phosphopentane phosphatase</fullName>
    </alternativeName>
</protein>
<proteinExistence type="inferred from homology"/>
<comment type="function">
    <text evidence="1">Bifunctional enzyme that catalyzes the enolization of 2,3-diketo-5-methylthiopentyl-1-phosphate (DK-MTP-1-P) into the intermediate 2-hydroxy-3-keto-5-methylthiopentenyl-1-phosphate (HK-MTPenyl-1-P), which is then dephosphorylated to form the acireductone 1,2-dihydroxy-3-keto-5-methylthiopentene (DHK-MTPene).</text>
</comment>
<comment type="catalytic activity">
    <reaction evidence="1">
        <text>5-methylsulfanyl-2,3-dioxopentyl phosphate + H2O = 1,2-dihydroxy-5-(methylsulfanyl)pent-1-en-3-one + phosphate</text>
        <dbReference type="Rhea" id="RHEA:21700"/>
        <dbReference type="ChEBI" id="CHEBI:15377"/>
        <dbReference type="ChEBI" id="CHEBI:43474"/>
        <dbReference type="ChEBI" id="CHEBI:49252"/>
        <dbReference type="ChEBI" id="CHEBI:58828"/>
        <dbReference type="EC" id="3.1.3.77"/>
    </reaction>
</comment>
<comment type="cofactor">
    <cofactor evidence="1">
        <name>Mg(2+)</name>
        <dbReference type="ChEBI" id="CHEBI:18420"/>
    </cofactor>
    <text evidence="1">Binds 1 Mg(2+) ion per subunit.</text>
</comment>
<comment type="pathway">
    <text evidence="1">Amino-acid biosynthesis; L-methionine biosynthesis via salvage pathway; L-methionine from S-methyl-5-thio-alpha-D-ribose 1-phosphate: step 3/6.</text>
</comment>
<comment type="pathway">
    <text evidence="1">Amino-acid biosynthesis; L-methionine biosynthesis via salvage pathway; L-methionine from S-methyl-5-thio-alpha-D-ribose 1-phosphate: step 4/6.</text>
</comment>
<comment type="subunit">
    <text evidence="1">Monomer.</text>
</comment>
<comment type="subcellular location">
    <subcellularLocation>
        <location evidence="1">Cytoplasm</location>
    </subcellularLocation>
    <subcellularLocation>
        <location evidence="1">Nucleus</location>
    </subcellularLocation>
</comment>
<comment type="similarity">
    <text evidence="1">Belongs to the HAD-like hydrolase superfamily. MasA/MtnC family.</text>
</comment>
<organism>
    <name type="scientific">Fusarium vanettenii (strain ATCC MYA-4622 / CBS 123669 / FGSC 9596 / NRRL 45880 / 77-13-4)</name>
    <name type="common">Fusarium solani subsp. pisi</name>
    <dbReference type="NCBI Taxonomy" id="660122"/>
    <lineage>
        <taxon>Eukaryota</taxon>
        <taxon>Fungi</taxon>
        <taxon>Dikarya</taxon>
        <taxon>Ascomycota</taxon>
        <taxon>Pezizomycotina</taxon>
        <taxon>Sordariomycetes</taxon>
        <taxon>Hypocreomycetidae</taxon>
        <taxon>Hypocreales</taxon>
        <taxon>Nectriaceae</taxon>
        <taxon>Fusarium</taxon>
        <taxon>Fusarium solani species complex</taxon>
        <taxon>Fusarium vanettenii</taxon>
    </lineage>
</organism>
<feature type="chain" id="PRO_0000394004" description="Enolase-phosphatase E1">
    <location>
        <begin position="1"/>
        <end position="238"/>
    </location>
</feature>
<feature type="binding site" evidence="1">
    <location>
        <position position="14"/>
    </location>
    <ligand>
        <name>Mg(2+)</name>
        <dbReference type="ChEBI" id="CHEBI:18420"/>
    </ligand>
</feature>
<feature type="binding site" evidence="1">
    <location>
        <position position="16"/>
    </location>
    <ligand>
        <name>Mg(2+)</name>
        <dbReference type="ChEBI" id="CHEBI:18420"/>
    </ligand>
</feature>
<feature type="binding site" evidence="1">
    <location>
        <begin position="128"/>
        <end position="129"/>
    </location>
    <ligand>
        <name>substrate</name>
    </ligand>
</feature>
<feature type="binding site" evidence="1">
    <location>
        <position position="165"/>
    </location>
    <ligand>
        <name>substrate</name>
    </ligand>
</feature>
<feature type="binding site" evidence="1">
    <location>
        <position position="192"/>
    </location>
    <ligand>
        <name>Mg(2+)</name>
        <dbReference type="ChEBI" id="CHEBI:18420"/>
    </ligand>
</feature>
<sequence length="238" mass="26826">MTLNLAEYDVLVFDIEGTVCPISFVKDVLFPYALEALPKVLDQEWDSPEFAKYRDAFPEEYRNSRPDFEAHVRDLVKRDVKIAYLKSLQGYLWLQGYKSGDIVAPLFPDVDPFFNQAVKDGKKIIIYSSGSVPAQKLLFSHTNSEKSDMTPLIADYFDTTNAGPKTEVDSYRKIISSHPEHKDLGRWLFLSDNIHEVSAAVEAGIRSVPVIRDGNAPLPPDNSLTKLAISEFKHSEDA</sequence>
<keyword id="KW-0028">Amino-acid biosynthesis</keyword>
<keyword id="KW-0963">Cytoplasm</keyword>
<keyword id="KW-0378">Hydrolase</keyword>
<keyword id="KW-0460">Magnesium</keyword>
<keyword id="KW-0479">Metal-binding</keyword>
<keyword id="KW-0486">Methionine biosynthesis</keyword>
<keyword id="KW-0539">Nucleus</keyword>
<keyword id="KW-1185">Reference proteome</keyword>
<evidence type="ECO:0000255" key="1">
    <source>
        <dbReference type="HAMAP-Rule" id="MF_03117"/>
    </source>
</evidence>
<gene>
    <name evidence="1" type="primary">UTR4</name>
    <name type="ORF">NECHADRAFT_70452</name>
</gene>
<accession>C7Z9X4</accession>